<feature type="initiator methionine" description="Removed" evidence="15">
    <location>
        <position position="1"/>
    </location>
</feature>
<feature type="chain" id="PRO_0000194951" description="NEDD8-activating enzyme E1 regulatory subunit">
    <location>
        <begin position="2"/>
        <end position="534"/>
    </location>
</feature>
<feature type="region of interest" description="Interaction with UBA3">
    <location>
        <begin position="331"/>
        <end position="344"/>
    </location>
</feature>
<feature type="site" description="Interaction with UBA3">
    <location>
        <position position="211"/>
    </location>
</feature>
<feature type="modified residue" description="N-acetylalanine" evidence="15">
    <location>
        <position position="2"/>
    </location>
</feature>
<feature type="modified residue" description="N6-acetyllysine" evidence="14">
    <location>
        <position position="6"/>
    </location>
</feature>
<feature type="modified residue" description="N6-acetyllysine" evidence="1">
    <location>
        <position position="341"/>
    </location>
</feature>
<feature type="splice variant" id="VSP_054258" description="In isoform 3." evidence="13">
    <location>
        <begin position="1"/>
        <end position="89"/>
    </location>
</feature>
<feature type="splice variant" id="VSP_042895" description="In isoform 2." evidence="12">
    <original>MAQLGKLLKEQKYDRQL</original>
    <variation>MDAQQTKTNEA</variation>
    <location>
        <begin position="1"/>
        <end position="17"/>
    </location>
</feature>
<feature type="splice variant" id="VSP_054259" description="In isoform 4." evidence="12">
    <original>G</original>
    <variation>GNVG</variation>
    <location>
        <position position="53"/>
    </location>
</feature>
<feature type="sequence variant" id="VAR_088123" description="In NEDFIH; uncertain significance; dbSNP:rs760101172." evidence="10">
    <original>L</original>
    <variation>F</variation>
    <location>
        <position position="49"/>
    </location>
</feature>
<feature type="sequence variant" id="VAR_088124" description="In NEDFIH; uncertain significance; decreased protein abundance in homozygous patient cells; patient cells show a decreased amount of neddylated proteins; dbSNP:rs752555475." evidence="10">
    <original>R</original>
    <variation>Q</variation>
    <location>
        <position position="85"/>
    </location>
</feature>
<feature type="sequence variant" id="VAR_052435" description="In dbSNP:rs363212.">
    <original>S</original>
    <variation>F</variation>
    <location>
        <position position="101"/>
    </location>
</feature>
<feature type="sequence variant" id="VAR_088125" description="In NEDFIH; uncertain significance; dbSNP:rs777573115." evidence="10">
    <original>C</original>
    <variation>W</variation>
    <location>
        <position position="294"/>
    </location>
</feature>
<feature type="sequence variant" id="VAR_088126" description="In NEDFIH; uncertain significance; dbSNP:rs1959664594." evidence="10">
    <original>R</original>
    <variation>Q</variation>
    <location>
        <position position="430"/>
    </location>
</feature>
<feature type="mutagenesis site" description="Impairs the formation of the NEDD8-UBA3 thioester." evidence="4">
    <original>D</original>
    <variation>A</variation>
    <location>
        <position position="331"/>
    </location>
</feature>
<feature type="sequence conflict" description="In Ref. 3; BAG53511." evidence="13" ref="3">
    <original>A</original>
    <variation>V</variation>
    <location>
        <position position="268"/>
    </location>
</feature>
<feature type="sequence conflict" description="In Ref. 3; BAG53511." evidence="13" ref="3">
    <original>I</original>
    <variation>T</variation>
    <location>
        <position position="285"/>
    </location>
</feature>
<feature type="helix" evidence="16">
    <location>
        <begin position="3"/>
        <end position="12"/>
    </location>
</feature>
<feature type="helix" evidence="16">
    <location>
        <begin position="14"/>
        <end position="30"/>
    </location>
</feature>
<feature type="strand" evidence="16">
    <location>
        <begin position="32"/>
        <end position="36"/>
    </location>
</feature>
<feature type="helix" evidence="16">
    <location>
        <begin position="40"/>
        <end position="50"/>
    </location>
</feature>
<feature type="turn" evidence="16">
    <location>
        <begin position="51"/>
        <end position="53"/>
    </location>
</feature>
<feature type="strand" evidence="16">
    <location>
        <begin position="55"/>
        <end position="60"/>
    </location>
</feature>
<feature type="helix" evidence="16">
    <location>
        <begin position="67"/>
        <end position="72"/>
    </location>
</feature>
<feature type="helix" evidence="16">
    <location>
        <begin position="78"/>
        <end position="80"/>
    </location>
</feature>
<feature type="helix" evidence="16">
    <location>
        <begin position="85"/>
        <end position="94"/>
    </location>
</feature>
<feature type="strand" evidence="16">
    <location>
        <begin position="104"/>
        <end position="107"/>
    </location>
</feature>
<feature type="helix" evidence="16">
    <location>
        <begin position="109"/>
        <end position="114"/>
    </location>
</feature>
<feature type="helix" evidence="16">
    <location>
        <begin position="117"/>
        <end position="122"/>
    </location>
</feature>
<feature type="strand" evidence="16">
    <location>
        <begin position="124"/>
        <end position="130"/>
    </location>
</feature>
<feature type="helix" evidence="16">
    <location>
        <begin position="133"/>
        <end position="145"/>
    </location>
</feature>
<feature type="strand" evidence="16">
    <location>
        <begin position="150"/>
        <end position="156"/>
    </location>
</feature>
<feature type="strand" evidence="16">
    <location>
        <begin position="159"/>
        <end position="165"/>
    </location>
</feature>
<feature type="strand" evidence="16">
    <location>
        <begin position="169"/>
        <end position="172"/>
    </location>
</feature>
<feature type="strand" evidence="16">
    <location>
        <begin position="185"/>
        <end position="187"/>
    </location>
</feature>
<feature type="helix" evidence="16">
    <location>
        <begin position="190"/>
        <end position="197"/>
    </location>
</feature>
<feature type="strand" evidence="17">
    <location>
        <begin position="201"/>
        <end position="204"/>
    </location>
</feature>
<feature type="helix" evidence="16">
    <location>
        <begin position="209"/>
        <end position="211"/>
    </location>
</feature>
<feature type="helix" evidence="16">
    <location>
        <begin position="214"/>
        <end position="225"/>
    </location>
</feature>
<feature type="turn" evidence="16">
    <location>
        <begin position="226"/>
        <end position="229"/>
    </location>
</feature>
<feature type="helix" evidence="16">
    <location>
        <begin position="236"/>
        <end position="249"/>
    </location>
</feature>
<feature type="strand" evidence="17">
    <location>
        <begin position="257"/>
        <end position="259"/>
    </location>
</feature>
<feature type="helix" evidence="16">
    <location>
        <begin position="262"/>
        <end position="275"/>
    </location>
</feature>
<feature type="helix" evidence="16">
    <location>
        <begin position="283"/>
        <end position="289"/>
    </location>
</feature>
<feature type="helix" evidence="16">
    <location>
        <begin position="292"/>
        <end position="295"/>
    </location>
</feature>
<feature type="strand" evidence="18">
    <location>
        <begin position="299"/>
        <end position="301"/>
    </location>
</feature>
<feature type="helix" evidence="16">
    <location>
        <begin position="303"/>
        <end position="316"/>
    </location>
</feature>
<feature type="turn" evidence="16">
    <location>
        <begin position="317"/>
        <end position="321"/>
    </location>
</feature>
<feature type="helix" evidence="16">
    <location>
        <begin position="336"/>
        <end position="366"/>
    </location>
</feature>
<feature type="turn" evidence="16">
    <location>
        <begin position="367"/>
        <end position="369"/>
    </location>
</feature>
<feature type="strand" evidence="16">
    <location>
        <begin position="372"/>
        <end position="375"/>
    </location>
</feature>
<feature type="helix" evidence="16">
    <location>
        <begin position="377"/>
        <end position="385"/>
    </location>
</feature>
<feature type="helix" evidence="16">
    <location>
        <begin position="387"/>
        <end position="389"/>
    </location>
</feature>
<feature type="strand" evidence="16">
    <location>
        <begin position="391"/>
        <end position="393"/>
    </location>
</feature>
<feature type="helix" evidence="16">
    <location>
        <begin position="398"/>
        <end position="402"/>
    </location>
</feature>
<feature type="turn" evidence="16">
    <location>
        <begin position="404"/>
        <end position="406"/>
    </location>
</feature>
<feature type="helix" evidence="16">
    <location>
        <begin position="409"/>
        <end position="415"/>
    </location>
</feature>
<feature type="helix" evidence="16">
    <location>
        <begin position="423"/>
        <end position="439"/>
    </location>
</feature>
<feature type="turn" evidence="16">
    <location>
        <begin position="447"/>
        <end position="449"/>
    </location>
</feature>
<feature type="helix" evidence="16">
    <location>
        <begin position="450"/>
        <end position="467"/>
    </location>
</feature>
<feature type="helix" evidence="16">
    <location>
        <begin position="476"/>
        <end position="484"/>
    </location>
</feature>
<feature type="turn" evidence="16">
    <location>
        <begin position="485"/>
        <end position="487"/>
    </location>
</feature>
<feature type="helix" evidence="16">
    <location>
        <begin position="491"/>
        <end position="510"/>
    </location>
</feature>
<feature type="strand" evidence="16">
    <location>
        <begin position="520"/>
        <end position="523"/>
    </location>
</feature>
<feature type="turn" evidence="16">
    <location>
        <begin position="524"/>
        <end position="527"/>
    </location>
</feature>
<feature type="strand" evidence="16">
    <location>
        <begin position="528"/>
        <end position="531"/>
    </location>
</feature>
<keyword id="KW-0002">3D-structure</keyword>
<keyword id="KW-0007">Acetylation</keyword>
<keyword id="KW-0025">Alternative splicing</keyword>
<keyword id="KW-0053">Apoptosis</keyword>
<keyword id="KW-0131">Cell cycle</keyword>
<keyword id="KW-1003">Cell membrane</keyword>
<keyword id="KW-0225">Disease variant</keyword>
<keyword id="KW-0991">Intellectual disability</keyword>
<keyword id="KW-0472">Membrane</keyword>
<keyword id="KW-1267">Proteomics identification</keyword>
<keyword id="KW-1185">Reference proteome</keyword>
<keyword id="KW-0832">Ubl conjugation</keyword>
<keyword id="KW-0833">Ubl conjugation pathway</keyword>
<reference key="1">
    <citation type="journal article" date="1996" name="J. Biol. Chem.">
        <title>APP-BP1, a novel protein that binds to the carboxyl-terminal region of the amyloid precursor protein.</title>
        <authorList>
            <person name="Chow N."/>
            <person name="Korenberg J.R."/>
            <person name="Chen X.-N."/>
            <person name="Neve R.L."/>
        </authorList>
    </citation>
    <scope>NUCLEOTIDE SEQUENCE [MRNA] (ISOFORM 1)</scope>
    <scope>INTERACTION WITH APP</scope>
    <scope>TISSUE SPECIFICITY</scope>
    <source>
        <tissue>Fetal brain</tissue>
        <tissue>Fetal skeletal muscle</tissue>
    </source>
</reference>
<reference key="2">
    <citation type="submission" date="2002-12" db="EMBL/GenBank/DDBJ databases">
        <title>Identification of a new human protooncogene.</title>
        <authorList>
            <person name="Kim J.W."/>
        </authorList>
    </citation>
    <scope>NUCLEOTIDE SEQUENCE [LARGE SCALE MRNA] (ISOFORM 1)</scope>
</reference>
<reference key="3">
    <citation type="journal article" date="2004" name="Nat. Genet.">
        <title>Complete sequencing and characterization of 21,243 full-length human cDNAs.</title>
        <authorList>
            <person name="Ota T."/>
            <person name="Suzuki Y."/>
            <person name="Nishikawa T."/>
            <person name="Otsuki T."/>
            <person name="Sugiyama T."/>
            <person name="Irie R."/>
            <person name="Wakamatsu A."/>
            <person name="Hayashi K."/>
            <person name="Sato H."/>
            <person name="Nagai K."/>
            <person name="Kimura K."/>
            <person name="Makita H."/>
            <person name="Sekine M."/>
            <person name="Obayashi M."/>
            <person name="Nishi T."/>
            <person name="Shibahara T."/>
            <person name="Tanaka T."/>
            <person name="Ishii S."/>
            <person name="Yamamoto J."/>
            <person name="Saito K."/>
            <person name="Kawai Y."/>
            <person name="Isono Y."/>
            <person name="Nakamura Y."/>
            <person name="Nagahari K."/>
            <person name="Murakami K."/>
            <person name="Yasuda T."/>
            <person name="Iwayanagi T."/>
            <person name="Wagatsuma M."/>
            <person name="Shiratori A."/>
            <person name="Sudo H."/>
            <person name="Hosoiri T."/>
            <person name="Kaku Y."/>
            <person name="Kodaira H."/>
            <person name="Kondo H."/>
            <person name="Sugawara M."/>
            <person name="Takahashi M."/>
            <person name="Kanda K."/>
            <person name="Yokoi T."/>
            <person name="Furuya T."/>
            <person name="Kikkawa E."/>
            <person name="Omura Y."/>
            <person name="Abe K."/>
            <person name="Kamihara K."/>
            <person name="Katsuta N."/>
            <person name="Sato K."/>
            <person name="Tanikawa M."/>
            <person name="Yamazaki M."/>
            <person name="Ninomiya K."/>
            <person name="Ishibashi T."/>
            <person name="Yamashita H."/>
            <person name="Murakawa K."/>
            <person name="Fujimori K."/>
            <person name="Tanai H."/>
            <person name="Kimata M."/>
            <person name="Watanabe M."/>
            <person name="Hiraoka S."/>
            <person name="Chiba Y."/>
            <person name="Ishida S."/>
            <person name="Ono Y."/>
            <person name="Takiguchi S."/>
            <person name="Watanabe S."/>
            <person name="Yosida M."/>
            <person name="Hotuta T."/>
            <person name="Kusano J."/>
            <person name="Kanehori K."/>
            <person name="Takahashi-Fujii A."/>
            <person name="Hara H."/>
            <person name="Tanase T.-O."/>
            <person name="Nomura Y."/>
            <person name="Togiya S."/>
            <person name="Komai F."/>
            <person name="Hara R."/>
            <person name="Takeuchi K."/>
            <person name="Arita M."/>
            <person name="Imose N."/>
            <person name="Musashino K."/>
            <person name="Yuuki H."/>
            <person name="Oshima A."/>
            <person name="Sasaki N."/>
            <person name="Aotsuka S."/>
            <person name="Yoshikawa Y."/>
            <person name="Matsunawa H."/>
            <person name="Ichihara T."/>
            <person name="Shiohata N."/>
            <person name="Sano S."/>
            <person name="Moriya S."/>
            <person name="Momiyama H."/>
            <person name="Satoh N."/>
            <person name="Takami S."/>
            <person name="Terashima Y."/>
            <person name="Suzuki O."/>
            <person name="Nakagawa S."/>
            <person name="Senoh A."/>
            <person name="Mizoguchi H."/>
            <person name="Goto Y."/>
            <person name="Shimizu F."/>
            <person name="Wakebe H."/>
            <person name="Hishigaki H."/>
            <person name="Watanabe T."/>
            <person name="Sugiyama A."/>
            <person name="Takemoto M."/>
            <person name="Kawakami B."/>
            <person name="Yamazaki M."/>
            <person name="Watanabe K."/>
            <person name="Kumagai A."/>
            <person name="Itakura S."/>
            <person name="Fukuzumi Y."/>
            <person name="Fujimori Y."/>
            <person name="Komiyama M."/>
            <person name="Tashiro H."/>
            <person name="Tanigami A."/>
            <person name="Fujiwara T."/>
            <person name="Ono T."/>
            <person name="Yamada K."/>
            <person name="Fujii Y."/>
            <person name="Ozaki K."/>
            <person name="Hirao M."/>
            <person name="Ohmori Y."/>
            <person name="Kawabata A."/>
            <person name="Hikiji T."/>
            <person name="Kobatake N."/>
            <person name="Inagaki H."/>
            <person name="Ikema Y."/>
            <person name="Okamoto S."/>
            <person name="Okitani R."/>
            <person name="Kawakami T."/>
            <person name="Noguchi S."/>
            <person name="Itoh T."/>
            <person name="Shigeta K."/>
            <person name="Senba T."/>
            <person name="Matsumura K."/>
            <person name="Nakajima Y."/>
            <person name="Mizuno T."/>
            <person name="Morinaga M."/>
            <person name="Sasaki M."/>
            <person name="Togashi T."/>
            <person name="Oyama M."/>
            <person name="Hata H."/>
            <person name="Watanabe M."/>
            <person name="Komatsu T."/>
            <person name="Mizushima-Sugano J."/>
            <person name="Satoh T."/>
            <person name="Shirai Y."/>
            <person name="Takahashi Y."/>
            <person name="Nakagawa K."/>
            <person name="Okumura K."/>
            <person name="Nagase T."/>
            <person name="Nomura N."/>
            <person name="Kikuchi H."/>
            <person name="Masuho Y."/>
            <person name="Yamashita R."/>
            <person name="Nakai K."/>
            <person name="Yada T."/>
            <person name="Nakamura Y."/>
            <person name="Ohara O."/>
            <person name="Isogai T."/>
            <person name="Sugano S."/>
        </authorList>
    </citation>
    <scope>NUCLEOTIDE SEQUENCE [LARGE SCALE MRNA] (ISOFORMS 1; 2 AND 4)</scope>
    <source>
        <tissue>Testis</tissue>
    </source>
</reference>
<reference key="4">
    <citation type="journal article" date="1999" name="Genomics">
        <title>Genome duplications and other features in 12 Mb of DNA sequence from human chromosome 16p and 16q.</title>
        <authorList>
            <person name="Loftus B.J."/>
            <person name="Kim U.-J."/>
            <person name="Sneddon V.P."/>
            <person name="Kalush F."/>
            <person name="Brandon R."/>
            <person name="Fuhrmann J."/>
            <person name="Mason T."/>
            <person name="Crosby M.L."/>
            <person name="Barnstead M."/>
            <person name="Cronin L."/>
            <person name="Mays A.D."/>
            <person name="Cao Y."/>
            <person name="Xu R.X."/>
            <person name="Kang H.-L."/>
            <person name="Mitchell S."/>
            <person name="Eichler E.E."/>
            <person name="Harris P.C."/>
            <person name="Venter J.C."/>
            <person name="Adams M.D."/>
        </authorList>
    </citation>
    <scope>NUCLEOTIDE SEQUENCE [LARGE SCALE GENOMIC DNA]</scope>
</reference>
<reference key="5">
    <citation type="journal article" date="2001" name="Genome Res.">
        <title>Towards a catalog of human genes and proteins: sequencing and analysis of 500 novel complete protein coding human cDNAs.</title>
        <authorList>
            <person name="Wiemann S."/>
            <person name="Weil B."/>
            <person name="Wellenreuther R."/>
            <person name="Gassenhuber J."/>
            <person name="Glassl S."/>
            <person name="Ansorge W."/>
            <person name="Boecher M."/>
            <person name="Bloecker H."/>
            <person name="Bauersachs S."/>
            <person name="Blum H."/>
            <person name="Lauber J."/>
            <person name="Duesterhoeft A."/>
            <person name="Beyer A."/>
            <person name="Koehrer K."/>
            <person name="Strack N."/>
            <person name="Mewes H.-W."/>
            <person name="Ottenwaelder B."/>
            <person name="Obermaier B."/>
            <person name="Tampe J."/>
            <person name="Heubner D."/>
            <person name="Wambutt R."/>
            <person name="Korn B."/>
            <person name="Klein M."/>
            <person name="Poustka A."/>
        </authorList>
    </citation>
    <scope>NUCLEOTIDE SEQUENCE [LARGE SCALE MRNA] (ISOFORM 1)</scope>
    <source>
        <tissue>Testis</tissue>
    </source>
</reference>
<reference key="6">
    <citation type="journal article" date="2004" name="Nature">
        <title>The sequence and analysis of duplication-rich human chromosome 16.</title>
        <authorList>
            <person name="Martin J."/>
            <person name="Han C."/>
            <person name="Gordon L.A."/>
            <person name="Terry A."/>
            <person name="Prabhakar S."/>
            <person name="She X."/>
            <person name="Xie G."/>
            <person name="Hellsten U."/>
            <person name="Chan Y.M."/>
            <person name="Altherr M."/>
            <person name="Couronne O."/>
            <person name="Aerts A."/>
            <person name="Bajorek E."/>
            <person name="Black S."/>
            <person name="Blumer H."/>
            <person name="Branscomb E."/>
            <person name="Brown N.C."/>
            <person name="Bruno W.J."/>
            <person name="Buckingham J.M."/>
            <person name="Callen D.F."/>
            <person name="Campbell C.S."/>
            <person name="Campbell M.L."/>
            <person name="Campbell E.W."/>
            <person name="Caoile C."/>
            <person name="Challacombe J.F."/>
            <person name="Chasteen L.A."/>
            <person name="Chertkov O."/>
            <person name="Chi H.C."/>
            <person name="Christensen M."/>
            <person name="Clark L.M."/>
            <person name="Cohn J.D."/>
            <person name="Denys M."/>
            <person name="Detter J.C."/>
            <person name="Dickson M."/>
            <person name="Dimitrijevic-Bussod M."/>
            <person name="Escobar J."/>
            <person name="Fawcett J.J."/>
            <person name="Flowers D."/>
            <person name="Fotopulos D."/>
            <person name="Glavina T."/>
            <person name="Gomez M."/>
            <person name="Gonzales E."/>
            <person name="Goodstein D."/>
            <person name="Goodwin L.A."/>
            <person name="Grady D.L."/>
            <person name="Grigoriev I."/>
            <person name="Groza M."/>
            <person name="Hammon N."/>
            <person name="Hawkins T."/>
            <person name="Haydu L."/>
            <person name="Hildebrand C.E."/>
            <person name="Huang W."/>
            <person name="Israni S."/>
            <person name="Jett J."/>
            <person name="Jewett P.B."/>
            <person name="Kadner K."/>
            <person name="Kimball H."/>
            <person name="Kobayashi A."/>
            <person name="Krawczyk M.-C."/>
            <person name="Leyba T."/>
            <person name="Longmire J.L."/>
            <person name="Lopez F."/>
            <person name="Lou Y."/>
            <person name="Lowry S."/>
            <person name="Ludeman T."/>
            <person name="Manohar C.F."/>
            <person name="Mark G.A."/>
            <person name="McMurray K.L."/>
            <person name="Meincke L.J."/>
            <person name="Morgan J."/>
            <person name="Moyzis R.K."/>
            <person name="Mundt M.O."/>
            <person name="Munk A.C."/>
            <person name="Nandkeshwar R.D."/>
            <person name="Pitluck S."/>
            <person name="Pollard M."/>
            <person name="Predki P."/>
            <person name="Parson-Quintana B."/>
            <person name="Ramirez L."/>
            <person name="Rash S."/>
            <person name="Retterer J."/>
            <person name="Ricke D.O."/>
            <person name="Robinson D.L."/>
            <person name="Rodriguez A."/>
            <person name="Salamov A."/>
            <person name="Saunders E.H."/>
            <person name="Scott D."/>
            <person name="Shough T."/>
            <person name="Stallings R.L."/>
            <person name="Stalvey M."/>
            <person name="Sutherland R.D."/>
            <person name="Tapia R."/>
            <person name="Tesmer J.G."/>
            <person name="Thayer N."/>
            <person name="Thompson L.S."/>
            <person name="Tice H."/>
            <person name="Torney D.C."/>
            <person name="Tran-Gyamfi M."/>
            <person name="Tsai M."/>
            <person name="Ulanovsky L.E."/>
            <person name="Ustaszewska A."/>
            <person name="Vo N."/>
            <person name="White P.S."/>
            <person name="Williams A.L."/>
            <person name="Wills P.L."/>
            <person name="Wu J.-R."/>
            <person name="Wu K."/>
            <person name="Yang J."/>
            <person name="DeJong P."/>
            <person name="Bruce D."/>
            <person name="Doggett N.A."/>
            <person name="Deaven L."/>
            <person name="Schmutz J."/>
            <person name="Grimwood J."/>
            <person name="Richardson P."/>
            <person name="Rokhsar D.S."/>
            <person name="Eichler E.E."/>
            <person name="Gilna P."/>
            <person name="Lucas S.M."/>
            <person name="Myers R.M."/>
            <person name="Rubin E.M."/>
            <person name="Pennacchio L.A."/>
        </authorList>
    </citation>
    <scope>NUCLEOTIDE SEQUENCE [LARGE SCALE GENOMIC DNA]</scope>
</reference>
<reference key="7">
    <citation type="submission" date="2005-07" db="EMBL/GenBank/DDBJ databases">
        <authorList>
            <person name="Mural R.J."/>
            <person name="Istrail S."/>
            <person name="Sutton G.G."/>
            <person name="Florea L."/>
            <person name="Halpern A.L."/>
            <person name="Mobarry C.M."/>
            <person name="Lippert R."/>
            <person name="Walenz B."/>
            <person name="Shatkay H."/>
            <person name="Dew I."/>
            <person name="Miller J.R."/>
            <person name="Flanigan M.J."/>
            <person name="Edwards N.J."/>
            <person name="Bolanos R."/>
            <person name="Fasulo D."/>
            <person name="Halldorsson B.V."/>
            <person name="Hannenhalli S."/>
            <person name="Turner R."/>
            <person name="Yooseph S."/>
            <person name="Lu F."/>
            <person name="Nusskern D.R."/>
            <person name="Shue B.C."/>
            <person name="Zheng X.H."/>
            <person name="Zhong F."/>
            <person name="Delcher A.L."/>
            <person name="Huson D.H."/>
            <person name="Kravitz S.A."/>
            <person name="Mouchard L."/>
            <person name="Reinert K."/>
            <person name="Remington K.A."/>
            <person name="Clark A.G."/>
            <person name="Waterman M.S."/>
            <person name="Eichler E.E."/>
            <person name="Adams M.D."/>
            <person name="Hunkapiller M.W."/>
            <person name="Myers E.W."/>
            <person name="Venter J.C."/>
        </authorList>
    </citation>
    <scope>NUCLEOTIDE SEQUENCE [LARGE SCALE GENOMIC DNA]</scope>
</reference>
<reference key="8">
    <citation type="journal article" date="2004" name="Genome Res.">
        <title>The status, quality, and expansion of the NIH full-length cDNA project: the Mammalian Gene Collection (MGC).</title>
        <authorList>
            <consortium name="The MGC Project Team"/>
        </authorList>
    </citation>
    <scope>NUCLEOTIDE SEQUENCE [LARGE SCALE MRNA] (ISOFORM 1)</scope>
    <source>
        <tissue>Muscle</tissue>
    </source>
</reference>
<reference key="9">
    <citation type="journal article" date="1999" name="J. Biol. Chem.">
        <title>Identification of the activating and conjugating enzymes of the NEDD8 conjugation pathway.</title>
        <authorList>
            <person name="Gong L."/>
            <person name="Yeh E.T.H."/>
        </authorList>
    </citation>
    <scope>FUNCTION</scope>
</reference>
<reference key="10">
    <citation type="journal article" date="2000" name="J. Biol. Chem.">
        <title>The amyloid precursor protein-binding protein APP-BP1 drives the cell cycle through the S-M checkpoint and causes apoptosis in neurons.</title>
        <authorList>
            <person name="Chen Y."/>
            <person name="McPhie D.L."/>
            <person name="Hirschberg J."/>
            <person name="Neve R.L."/>
        </authorList>
    </citation>
    <scope>FUNCTION</scope>
    <scope>INTERACTION WITH UBA3</scope>
</reference>
<reference key="11">
    <citation type="journal article" date="2003" name="J. Biol. Chem.">
        <title>Conservation in the mechanism of Nedd8 activation by the human AppBp1-Uba3 heterodimer.</title>
        <authorList>
            <person name="Bohnsack R.N."/>
            <person name="Haas A.L."/>
        </authorList>
    </citation>
    <scope>FUNCTION</scope>
    <scope>INTERACTION WITH UBA3</scope>
</reference>
<reference key="12">
    <citation type="journal article" date="2003" name="J. Cell Biol.">
        <title>APP-BP1 mediates APP-induced apoptosis and DNA synthesis and is increased in Alzheimer's disease brain.</title>
        <authorList>
            <person name="Chen Y."/>
            <person name="Liu W."/>
            <person name="McPhie D.L."/>
            <person name="Hassinger L."/>
            <person name="Neve R.L."/>
        </authorList>
    </citation>
    <scope>INTERACTION WITH APP</scope>
    <scope>SUBCELLULAR LOCATION</scope>
</reference>
<reference key="13">
    <citation type="journal article" date="2003" name="J. Neurochem.">
        <title>ASPP2 inhibits APP-BP1-mediated NEDD8 conjugation to cullin-1 and decreases APP-BP1-induced cell proliferation and neuronal apoptosis.</title>
        <authorList>
            <person name="Chen Y."/>
            <person name="Liu W."/>
            <person name="Naumovski L."/>
            <person name="Neve R.L."/>
        </authorList>
    </citation>
    <scope>INTERACTION WITH TP53BP2</scope>
</reference>
<reference key="14">
    <citation type="journal article" date="2008" name="Biochem. Biophys. Res. Commun.">
        <title>TRIP12 functions as an E3 ubiquitin ligase of APP-BP1.</title>
        <authorList>
            <person name="Park Y."/>
            <person name="Yoon S.K."/>
            <person name="Yoon J.B."/>
        </authorList>
    </citation>
    <scope>UBIQUITINATION</scope>
</reference>
<reference key="15">
    <citation type="journal article" date="2009" name="Science">
        <title>Lysine acetylation targets protein complexes and co-regulates major cellular functions.</title>
        <authorList>
            <person name="Choudhary C."/>
            <person name="Kumar C."/>
            <person name="Gnad F."/>
            <person name="Nielsen M.L."/>
            <person name="Rehman M."/>
            <person name="Walther T.C."/>
            <person name="Olsen J.V."/>
            <person name="Mann M."/>
        </authorList>
    </citation>
    <scope>ACETYLATION [LARGE SCALE ANALYSIS] AT LYS-6</scope>
    <scope>IDENTIFICATION BY MASS SPECTROMETRY [LARGE SCALE ANALYSIS]</scope>
</reference>
<reference key="16">
    <citation type="journal article" date="2011" name="BMC Syst. Biol.">
        <title>Initial characterization of the human central proteome.</title>
        <authorList>
            <person name="Burkard T.R."/>
            <person name="Planyavsky M."/>
            <person name="Kaupe I."/>
            <person name="Breitwieser F.P."/>
            <person name="Buerckstuemmer T."/>
            <person name="Bennett K.L."/>
            <person name="Superti-Furga G."/>
            <person name="Colinge J."/>
        </authorList>
    </citation>
    <scope>IDENTIFICATION BY MASS SPECTROMETRY [LARGE SCALE ANALYSIS]</scope>
</reference>
<reference key="17">
    <citation type="journal article" date="2012" name="Proc. Natl. Acad. Sci. U.S.A.">
        <title>N-terminal acetylome analyses and functional insights of the N-terminal acetyltransferase NatB.</title>
        <authorList>
            <person name="Van Damme P."/>
            <person name="Lasa M."/>
            <person name="Polevoda B."/>
            <person name="Gazquez C."/>
            <person name="Elosegui-Artola A."/>
            <person name="Kim D.S."/>
            <person name="De Juan-Pardo E."/>
            <person name="Demeyer K."/>
            <person name="Hole K."/>
            <person name="Larrea E."/>
            <person name="Timmerman E."/>
            <person name="Prieto J."/>
            <person name="Arnesen T."/>
            <person name="Sherman F."/>
            <person name="Gevaert K."/>
            <person name="Aldabe R."/>
        </authorList>
    </citation>
    <scope>ACETYLATION [LARGE SCALE ANALYSIS] AT ALA-2</scope>
    <scope>CLEAVAGE OF INITIATOR METHIONINE [LARGE SCALE ANALYSIS]</scope>
    <scope>IDENTIFICATION BY MASS SPECTROMETRY [LARGE SCALE ANALYSIS]</scope>
</reference>
<reference key="18">
    <citation type="journal article" date="2023" name="Am. J. Hum. Genet.">
        <title>Bi-allelic variants in NAE1 cause intellectual disability, ischiopubic hypoplasia, stress-mediated lymphopenia and neurodegeneration.</title>
        <authorList>
            <person name="Muffels I.J.J."/>
            <person name="Schene I.F."/>
            <person name="Rehmann H."/>
            <person name="Massink M.P.G."/>
            <person name="van der Wal M.M."/>
            <person name="Bauder C."/>
            <person name="Labeur M."/>
            <person name="Armando N.G."/>
            <person name="Lequin M.H."/>
            <person name="Houben M.L."/>
            <person name="Giltay J.C."/>
            <person name="Haitjema S."/>
            <person name="Huisman A."/>
            <person name="Vansenne F."/>
            <person name="Bluvstein J."/>
            <person name="Pappas J."/>
            <person name="Shailee L.V."/>
            <person name="Zarate Y.A."/>
            <person name="Mokry M."/>
            <person name="van Haaften G.W."/>
            <person name="Nieuwenhuis E.E.S."/>
            <person name="Refojo D."/>
            <person name="van Wijk F."/>
            <person name="Fuchs S.A."/>
            <person name="van Hasselt P.M."/>
        </authorList>
    </citation>
    <scope>INVOLVEMENT IN NEDFIH</scope>
    <scope>VARIANTS NEDFIH PHE-49; GLN-85; TRP-294 AND GLN-430</scope>
    <scope>CHARACTERIZATION OF VARIANT NEDFIH GLN-85</scope>
    <scope>FUNCTION</scope>
</reference>
<reference key="19">
    <citation type="journal article" date="2003" name="Mol. Cell">
        <title>The structure of the APPBP1-UBA3-NEDD8-ATP complex reveals the basis for selective ubiquitin-like protein activation by an E1.</title>
        <authorList>
            <person name="Walden H."/>
            <person name="Podgorski M.S."/>
            <person name="Huang D.T."/>
            <person name="Miller D.W."/>
            <person name="Howard R.J."/>
            <person name="Minor D.L. Jr."/>
            <person name="Holton J.M."/>
            <person name="Schulman B.A."/>
        </authorList>
    </citation>
    <scope>X-RAY CRYSTALLOGRAPHY (3.0 ANGSTROMS) OF 5-534 IN COMPLEX WITH UBA3; NEDD8 AND ATP</scope>
</reference>
<reference key="20">
    <citation type="journal article" date="2003" name="Nature">
        <title>Insights into the ubiquitin transfer cascade from the structure of the activating enzyme for NEDD8.</title>
        <authorList>
            <person name="Walden H."/>
            <person name="Podgorski M.S."/>
            <person name="Schulman B.A."/>
        </authorList>
    </citation>
    <scope>X-RAY CRYSTALLOGRAPHY (2.6 ANGSTROMS) OF 5-534 IN COMPLEX WITH UBA3</scope>
    <scope>MUTAGENESIS OF ASP-331</scope>
</reference>
<reference key="21">
    <citation type="journal article" date="2004" name="Nat. Struct. Mol. Biol.">
        <title>A unique E1-E2 interaction required for optimal conjugation of the ubiquitin-like protein NEDD8.</title>
        <authorList>
            <person name="Huang D.T."/>
            <person name="Miller D.W."/>
            <person name="Mathew R."/>
            <person name="Cassell R."/>
            <person name="Holton J.M."/>
            <person name="Roussel M.F."/>
            <person name="Schulman B.A."/>
        </authorList>
    </citation>
    <scope>X-RAY CRYSTALLOGRAPHY (2.6 ANGSTROMS) IN COMPLEX WITH UBA3 AND UBE2M</scope>
</reference>
<accession>Q13564</accession>
<accession>A6NCK0</accession>
<accession>A6NFN4</accession>
<accession>A8MU28</accession>
<accession>B2R700</accession>
<accession>B3KUP9</accession>
<protein>
    <recommendedName>
        <fullName>NEDD8-activating enzyme E1 regulatory subunit</fullName>
    </recommendedName>
    <alternativeName>
        <fullName>Amyloid beta precursor protein-binding protein 1, 59 kDa</fullName>
        <shortName>APP-BP1</shortName>
    </alternativeName>
    <alternativeName>
        <fullName>Amyloid protein-binding protein 1</fullName>
    </alternativeName>
    <alternativeName>
        <fullName>Proto-oncogene protein 1</fullName>
    </alternativeName>
</protein>
<name>ULA1_HUMAN</name>
<sequence length="534" mass="60246">MAQLGKLLKEQKYDRQLRLWGDHGQEALESAHVCLINATATGTEILKNLVLPGIGSFTIIDGNQVSGEDAGNNFFLQRSSIGKNRAEAAMEFLQELNSDVSGSFVEESPENLLDNDPSFFCRFTVVVATQLPESTSLRLADVLWNSQIPLLICRTYGLVGYMRIIIKEHPVIESHPDNALEDLRLDKPFPELREHFQSYDLDHMEKKDHSHTPWIVIIAKYLAQWYSETNGRIPKTYKEKEDFRDLIRQGILKNENGAPEDEENFEEAIKNVNTALNTTQIPSSIEDIFNDDRCINITKQTPSFWILARALKEFVAKEGQGNLPVRGTIPDMIADSGKYIKLQNVYREKAKKDAAAVGNHVAKLLQSIGQAPESISEKELKLLCSNSAFLRVVRCRSLAEEYGLDTINKDEIISSMDNPDNEIVLYLMLRAVDRFHKQQGRYPGVSNYQVEEDIGKLKSCLTGFLQEYGLSVMVKDDYVHEFCRYGAAEPHTIAAFLGGAAAQEVIKIITKQFVIFNNTYIYSGMSQTSATFQL</sequence>
<comment type="function">
    <text evidence="2 3 5 10">Regulatory subunit of the dimeric UBA3-NAE1 E1 enzyme. E1 activates NEDD8 by first adenylating its C-terminal glycine residue with ATP, thereafter linking this residue to the side chain of the catalytic cysteine, yielding a NEDD8-UBA3 thioester and free AMP. E1 finally transfers NEDD8 to the catalytic cysteine of UBE2M. Necessary for cell cycle progression through the S-M checkpoint. Overexpression of NAE1 causes apoptosis through deregulation of NEDD8 conjugation. The covalent attachment of NEDD8 to target proteins is known as 'neddylation' and the process is involved in the regulation of cell growth, viability and development.</text>
</comment>
<comment type="activity regulation">
    <text>Binding of TP53BP2 to the regulatory subunit NAE1 decreases neddylation activity.</text>
</comment>
<comment type="pathway">
    <text>Protein modification; protein neddylation.</text>
</comment>
<comment type="subunit">
    <text evidence="4 7 8">Heterodimer of UBA3 and NAE1. The complex binds NEDD8 and UBE2M. Binds APP and TP53BP2.</text>
</comment>
<comment type="interaction">
    <interactant intactId="EBI-718631">
        <id>Q13564</id>
    </interactant>
    <interactant intactId="EBI-77613">
        <id>P05067</id>
        <label>APP</label>
    </interactant>
    <organismsDiffer>false</organismsDiffer>
    <experiments>3</experiments>
</comment>
<comment type="interaction">
    <interactant intactId="EBI-718631">
        <id>Q13564</id>
    </interactant>
    <interactant intactId="EBI-7133736">
        <id>P07686</id>
        <label>HEXB</label>
    </interactant>
    <organismsDiffer>false</organismsDiffer>
    <experiments>3</experiments>
</comment>
<comment type="interaction">
    <interactant intactId="EBI-718631">
        <id>Q13564</id>
    </interactant>
    <interactant intactId="EBI-717567">
        <id>Q8TBC4</id>
        <label>UBA3</label>
    </interactant>
    <organismsDiffer>false</organismsDiffer>
    <experiments>3</experiments>
</comment>
<comment type="subcellular location">
    <subcellularLocation>
        <location evidence="6">Cell membrane</location>
    </subcellularLocation>
    <text>Colocalizes with APP in lipid rafts.</text>
</comment>
<comment type="alternative products">
    <event type="alternative splicing"/>
    <isoform>
        <id>Q13564-1</id>
        <name>1</name>
        <sequence type="displayed"/>
    </isoform>
    <isoform>
        <id>Q13564-2</id>
        <name>2</name>
        <sequence type="described" ref="VSP_042895"/>
    </isoform>
    <isoform>
        <id>Q13564-3</id>
        <name>3</name>
        <sequence type="described" ref="VSP_054258"/>
    </isoform>
    <isoform>
        <id>Q13564-4</id>
        <name>4</name>
        <sequence type="described" ref="VSP_054259"/>
    </isoform>
</comment>
<comment type="tissue specificity">
    <text evidence="11">Ubiquitous in fetal tissues. Expressed throughout the adult brain.</text>
</comment>
<comment type="PTM">
    <text evidence="9">Ubiquitinated by TRIP12, leading to its degradation by the proteasome.</text>
</comment>
<comment type="disease" evidence="10">
    <disease id="DI-06588">
        <name>Neurodevelopmental disorder with dysmorphic facies and ischiopubic hypoplasia</name>
        <acronym>NEDFIH</acronym>
        <description>An autosomal recessive disorder characterized by moderate to severe global developmental delay, facial dysmorphism, and ischiopubic synchondrosis hypoplasia. Affected individuals show infection-triggered lymphopenia, and loss of developmental milestones associated with epileptic spasms. Diminished white matter volume, enlarged ventricles, and thin corpus callosum are visible on brain imaging.</description>
        <dbReference type="MIM" id="620210"/>
    </disease>
    <text>The disease may be caused by variants affecting the gene represented in this entry.</text>
</comment>
<comment type="miscellaneous">
    <text>NAE1 and UBA3 correspond to the N-terminal and the C-terminal part of yeast UBA3. In yeast the two subunits form a single polypeptide chain.</text>
</comment>
<comment type="similarity">
    <text evidence="13">Belongs to the ubiquitin-activating E1 family. ULA1 subfamily.</text>
</comment>
<proteinExistence type="evidence at protein level"/>
<dbReference type="EMBL" id="U50939">
    <property type="protein sequence ID" value="AAC50477.1"/>
    <property type="molecule type" value="mRNA"/>
</dbReference>
<dbReference type="EMBL" id="AY197612">
    <property type="protein sequence ID" value="AAP35030.1"/>
    <property type="molecule type" value="mRNA"/>
</dbReference>
<dbReference type="EMBL" id="AK097680">
    <property type="protein sequence ID" value="BAG53511.1"/>
    <property type="molecule type" value="mRNA"/>
</dbReference>
<dbReference type="EMBL" id="AK298159">
    <property type="protein sequence ID" value="BAH12735.1"/>
    <property type="molecule type" value="mRNA"/>
</dbReference>
<dbReference type="EMBL" id="AK312784">
    <property type="protein sequence ID" value="BAG35647.1"/>
    <property type="molecule type" value="mRNA"/>
</dbReference>
<dbReference type="EMBL" id="AC004638">
    <property type="protein sequence ID" value="AAC23784.1"/>
    <property type="molecule type" value="Genomic_DNA"/>
</dbReference>
<dbReference type="EMBL" id="AC044802">
    <property type="status" value="NOT_ANNOTATED_CDS"/>
    <property type="molecule type" value="Genomic_DNA"/>
</dbReference>
<dbReference type="EMBL" id="AL136798">
    <property type="protein sequence ID" value="CAB66732.1"/>
    <property type="molecule type" value="mRNA"/>
</dbReference>
<dbReference type="EMBL" id="CH471092">
    <property type="protein sequence ID" value="EAW83042.1"/>
    <property type="molecule type" value="Genomic_DNA"/>
</dbReference>
<dbReference type="EMBL" id="BC000480">
    <property type="protein sequence ID" value="AAH00480.1"/>
    <property type="molecule type" value="mRNA"/>
</dbReference>
<dbReference type="EMBL" id="BC013301">
    <property type="protein sequence ID" value="AAH13301.1"/>
    <property type="molecule type" value="mRNA"/>
</dbReference>
<dbReference type="CCDS" id="CCDS10820.1">
    <molecule id="Q13564-1"/>
</dbReference>
<dbReference type="CCDS" id="CCDS42171.1">
    <molecule id="Q13564-2"/>
</dbReference>
<dbReference type="CCDS" id="CCDS42172.1">
    <molecule id="Q13564-3"/>
</dbReference>
<dbReference type="CCDS" id="CCDS67050.1">
    <molecule id="Q13564-4"/>
</dbReference>
<dbReference type="RefSeq" id="NP_001018169.1">
    <molecule id="Q13564-2"/>
    <property type="nucleotide sequence ID" value="NM_001018159.2"/>
</dbReference>
<dbReference type="RefSeq" id="NP_001018170.1">
    <molecule id="Q13564-3"/>
    <property type="nucleotide sequence ID" value="NM_001018160.2"/>
</dbReference>
<dbReference type="RefSeq" id="NP_001273429.1">
    <molecule id="Q13564-4"/>
    <property type="nucleotide sequence ID" value="NM_001286500.2"/>
</dbReference>
<dbReference type="RefSeq" id="NP_003896.1">
    <molecule id="Q13564-1"/>
    <property type="nucleotide sequence ID" value="NM_003905.4"/>
</dbReference>
<dbReference type="RefSeq" id="XP_005256272.1">
    <property type="nucleotide sequence ID" value="XM_005256215.1"/>
</dbReference>
<dbReference type="RefSeq" id="XP_011521724.1">
    <property type="nucleotide sequence ID" value="XM_011523422.2"/>
</dbReference>
<dbReference type="RefSeq" id="XP_047290791.1">
    <molecule id="Q13564-3"/>
    <property type="nucleotide sequence ID" value="XM_047434835.1"/>
</dbReference>
<dbReference type="RefSeq" id="XP_054170236.1">
    <molecule id="Q13564-3"/>
    <property type="nucleotide sequence ID" value="XM_054314261.1"/>
</dbReference>
<dbReference type="PDB" id="1R4M">
    <property type="method" value="X-ray"/>
    <property type="resolution" value="3.00 A"/>
    <property type="chains" value="A/C/E/G=1-534"/>
</dbReference>
<dbReference type="PDB" id="1R4N">
    <property type="method" value="X-ray"/>
    <property type="resolution" value="3.60 A"/>
    <property type="chains" value="A/C/E/G=1-534"/>
</dbReference>
<dbReference type="PDB" id="1TT5">
    <property type="method" value="X-ray"/>
    <property type="resolution" value="2.60 A"/>
    <property type="chains" value="A/C=1-534"/>
</dbReference>
<dbReference type="PDB" id="1YOV">
    <property type="method" value="X-ray"/>
    <property type="resolution" value="2.60 A"/>
    <property type="chains" value="A/C=1-534"/>
</dbReference>
<dbReference type="PDB" id="2NVU">
    <property type="method" value="X-ray"/>
    <property type="resolution" value="2.80 A"/>
    <property type="chains" value="A=1-534"/>
</dbReference>
<dbReference type="PDB" id="3DBH">
    <property type="method" value="X-ray"/>
    <property type="resolution" value="2.85 A"/>
    <property type="chains" value="A/C/E/G=1-534"/>
</dbReference>
<dbReference type="PDB" id="3DBL">
    <property type="method" value="X-ray"/>
    <property type="resolution" value="2.90 A"/>
    <property type="chains" value="A/C/E/G=1-534"/>
</dbReference>
<dbReference type="PDB" id="3DBR">
    <property type="method" value="X-ray"/>
    <property type="resolution" value="3.05 A"/>
    <property type="chains" value="A/C/E/G=1-534"/>
</dbReference>
<dbReference type="PDB" id="3GZN">
    <property type="method" value="X-ray"/>
    <property type="resolution" value="3.00 A"/>
    <property type="chains" value="A/C=1-534"/>
</dbReference>
<dbReference type="PDBsum" id="1R4M"/>
<dbReference type="PDBsum" id="1R4N"/>
<dbReference type="PDBsum" id="1TT5"/>
<dbReference type="PDBsum" id="1YOV"/>
<dbReference type="PDBsum" id="2NVU"/>
<dbReference type="PDBsum" id="3DBH"/>
<dbReference type="PDBsum" id="3DBL"/>
<dbReference type="PDBsum" id="3DBR"/>
<dbReference type="PDBsum" id="3GZN"/>
<dbReference type="SMR" id="Q13564"/>
<dbReference type="BioGRID" id="114402">
    <property type="interactions" value="115"/>
</dbReference>
<dbReference type="ComplexPortal" id="CPX-2587">
    <property type="entry name" value="NEDD8 E1 activating enzyme complex, NAE1-UBA3"/>
</dbReference>
<dbReference type="CORUM" id="Q13564"/>
<dbReference type="FunCoup" id="Q13564">
    <property type="interactions" value="3808"/>
</dbReference>
<dbReference type="IntAct" id="Q13564">
    <property type="interactions" value="36"/>
</dbReference>
<dbReference type="MINT" id="Q13564"/>
<dbReference type="STRING" id="9606.ENSP00000351990"/>
<dbReference type="BindingDB" id="Q13564"/>
<dbReference type="ChEMBL" id="CHEMBL2016431"/>
<dbReference type="DrugBank" id="DB00171">
    <property type="generic name" value="ATP"/>
</dbReference>
<dbReference type="DrugBank" id="DB11759">
    <property type="generic name" value="Pevonedistat"/>
</dbReference>
<dbReference type="DrugCentral" id="Q13564"/>
<dbReference type="GlyGen" id="Q13564">
    <property type="glycosylation" value="1 site, 1 O-linked glycan (1 site)"/>
</dbReference>
<dbReference type="iPTMnet" id="Q13564"/>
<dbReference type="MetOSite" id="Q13564"/>
<dbReference type="PhosphoSitePlus" id="Q13564"/>
<dbReference type="SwissPalm" id="Q13564"/>
<dbReference type="BioMuta" id="NAE1"/>
<dbReference type="DMDM" id="50400302"/>
<dbReference type="jPOST" id="Q13564"/>
<dbReference type="MassIVE" id="Q13564"/>
<dbReference type="PaxDb" id="9606-ENSP00000351990"/>
<dbReference type="PeptideAtlas" id="Q13564"/>
<dbReference type="ProteomicsDB" id="2076"/>
<dbReference type="ProteomicsDB" id="59567">
    <molecule id="Q13564-1"/>
</dbReference>
<dbReference type="ProteomicsDB" id="59568">
    <molecule id="Q13564-2"/>
</dbReference>
<dbReference type="ProteomicsDB" id="840"/>
<dbReference type="Pumba" id="Q13564"/>
<dbReference type="Antibodypedia" id="29312">
    <property type="antibodies" value="422 antibodies from 33 providers"/>
</dbReference>
<dbReference type="DNASU" id="8883"/>
<dbReference type="Ensembl" id="ENST00000290810.8">
    <molecule id="Q13564-1"/>
    <property type="protein sequence ID" value="ENSP00000290810.3"/>
    <property type="gene ID" value="ENSG00000159593.15"/>
</dbReference>
<dbReference type="Ensembl" id="ENST00000359087.8">
    <molecule id="Q13564-4"/>
    <property type="protein sequence ID" value="ENSP00000351990.4"/>
    <property type="gene ID" value="ENSG00000159593.15"/>
</dbReference>
<dbReference type="Ensembl" id="ENST00000379463.6">
    <molecule id="Q13564-2"/>
    <property type="protein sequence ID" value="ENSP00000368776.2"/>
    <property type="gene ID" value="ENSG00000159593.15"/>
</dbReference>
<dbReference type="Ensembl" id="ENST00000394074.6">
    <molecule id="Q13564-3"/>
    <property type="protein sequence ID" value="ENSP00000377637.2"/>
    <property type="gene ID" value="ENSG00000159593.15"/>
</dbReference>
<dbReference type="GeneID" id="8883"/>
<dbReference type="KEGG" id="hsa:8883"/>
<dbReference type="MANE-Select" id="ENST00000290810.8">
    <property type="protein sequence ID" value="ENSP00000290810.3"/>
    <property type="RefSeq nucleotide sequence ID" value="NM_003905.4"/>
    <property type="RefSeq protein sequence ID" value="NP_003896.1"/>
</dbReference>
<dbReference type="UCSC" id="uc002eqe.4">
    <molecule id="Q13564-1"/>
    <property type="organism name" value="human"/>
</dbReference>
<dbReference type="AGR" id="HGNC:621"/>
<dbReference type="CTD" id="8883"/>
<dbReference type="DisGeNET" id="8883"/>
<dbReference type="GeneCards" id="NAE1"/>
<dbReference type="HGNC" id="HGNC:621">
    <property type="gene designation" value="NAE1"/>
</dbReference>
<dbReference type="HPA" id="ENSG00000159593">
    <property type="expression patterns" value="Low tissue specificity"/>
</dbReference>
<dbReference type="MalaCards" id="NAE1"/>
<dbReference type="MIM" id="603385">
    <property type="type" value="gene"/>
</dbReference>
<dbReference type="MIM" id="620210">
    <property type="type" value="phenotype"/>
</dbReference>
<dbReference type="neXtProt" id="NX_Q13564"/>
<dbReference type="OpenTargets" id="ENSG00000159593"/>
<dbReference type="PharmGKB" id="PA162396730"/>
<dbReference type="VEuPathDB" id="HostDB:ENSG00000159593"/>
<dbReference type="eggNOG" id="KOG2016">
    <property type="taxonomic scope" value="Eukaryota"/>
</dbReference>
<dbReference type="GeneTree" id="ENSGT00550000074901"/>
<dbReference type="HOGENOM" id="CLU_019618_2_1_1"/>
<dbReference type="InParanoid" id="Q13564"/>
<dbReference type="OMA" id="KLITHQY"/>
<dbReference type="OrthoDB" id="1708823at2759"/>
<dbReference type="PAN-GO" id="Q13564">
    <property type="GO annotations" value="2 GO annotations based on evolutionary models"/>
</dbReference>
<dbReference type="PhylomeDB" id="Q13564"/>
<dbReference type="TreeFam" id="TF313972"/>
<dbReference type="BioCyc" id="MetaCyc:ENSG00000159593-MONOMER"/>
<dbReference type="BRENDA" id="6.2.1.64">
    <property type="organism ID" value="2681"/>
</dbReference>
<dbReference type="PathwayCommons" id="Q13564"/>
<dbReference type="Reactome" id="R-HSA-8951664">
    <property type="pathway name" value="Neddylation"/>
</dbReference>
<dbReference type="SignaLink" id="Q13564"/>
<dbReference type="SIGNOR" id="Q13564"/>
<dbReference type="UniPathway" id="UPA00885"/>
<dbReference type="BioGRID-ORCS" id="8883">
    <property type="hits" value="603 hits in 1174 CRISPR screens"/>
</dbReference>
<dbReference type="ChiTaRS" id="NAE1">
    <property type="organism name" value="human"/>
</dbReference>
<dbReference type="EvolutionaryTrace" id="Q13564"/>
<dbReference type="GeneWiki" id="APPBP1"/>
<dbReference type="GenomeRNAi" id="8883"/>
<dbReference type="Pharos" id="Q13564">
    <property type="development level" value="Tchem"/>
</dbReference>
<dbReference type="PRO" id="PR:Q13564"/>
<dbReference type="Proteomes" id="UP000005640">
    <property type="component" value="Chromosome 16"/>
</dbReference>
<dbReference type="RNAct" id="Q13564">
    <property type="molecule type" value="protein"/>
</dbReference>
<dbReference type="Bgee" id="ENSG00000159593">
    <property type="expression patterns" value="Expressed in secondary oocyte and 209 other cell types or tissues"/>
</dbReference>
<dbReference type="ExpressionAtlas" id="Q13564">
    <property type="expression patterns" value="baseline and differential"/>
</dbReference>
<dbReference type="GO" id="GO:0005737">
    <property type="term" value="C:cytoplasm"/>
    <property type="evidence" value="ECO:0000304"/>
    <property type="project" value="ProtInc"/>
</dbReference>
<dbReference type="GO" id="GO:0005829">
    <property type="term" value="C:cytosol"/>
    <property type="evidence" value="ECO:0000304"/>
    <property type="project" value="Reactome"/>
</dbReference>
<dbReference type="GO" id="GO:0098978">
    <property type="term" value="C:glutamatergic synapse"/>
    <property type="evidence" value="ECO:0007669"/>
    <property type="project" value="Ensembl"/>
</dbReference>
<dbReference type="GO" id="GO:0005886">
    <property type="term" value="C:plasma membrane"/>
    <property type="evidence" value="ECO:0007669"/>
    <property type="project" value="UniProtKB-SubCell"/>
</dbReference>
<dbReference type="GO" id="GO:0032991">
    <property type="term" value="C:protein-containing complex"/>
    <property type="evidence" value="ECO:0000314"/>
    <property type="project" value="UniProtKB"/>
</dbReference>
<dbReference type="GO" id="GO:0019781">
    <property type="term" value="F:NEDD8 activating enzyme activity"/>
    <property type="evidence" value="ECO:0007669"/>
    <property type="project" value="InterPro"/>
</dbReference>
<dbReference type="GO" id="GO:0046982">
    <property type="term" value="F:protein heterodimerization activity"/>
    <property type="evidence" value="ECO:0000353"/>
    <property type="project" value="UniProtKB"/>
</dbReference>
<dbReference type="GO" id="GO:0031625">
    <property type="term" value="F:ubiquitin protein ligase binding"/>
    <property type="evidence" value="ECO:0000353"/>
    <property type="project" value="UniProtKB"/>
</dbReference>
<dbReference type="GO" id="GO:0033314">
    <property type="term" value="P:mitotic DNA replication checkpoint signaling"/>
    <property type="evidence" value="ECO:0000314"/>
    <property type="project" value="UniProtKB"/>
</dbReference>
<dbReference type="GO" id="GO:0051402">
    <property type="term" value="P:neuron apoptotic process"/>
    <property type="evidence" value="ECO:0000314"/>
    <property type="project" value="UniProtKB"/>
</dbReference>
<dbReference type="GO" id="GO:0045116">
    <property type="term" value="P:protein neddylation"/>
    <property type="evidence" value="ECO:0000314"/>
    <property type="project" value="UniProtKB"/>
</dbReference>
<dbReference type="GO" id="GO:0042981">
    <property type="term" value="P:regulation of apoptotic process"/>
    <property type="evidence" value="ECO:0000314"/>
    <property type="project" value="UniProtKB"/>
</dbReference>
<dbReference type="GO" id="GO:0043523">
    <property type="term" value="P:regulation of neuron apoptotic process"/>
    <property type="evidence" value="ECO:0000314"/>
    <property type="project" value="UniProtKB"/>
</dbReference>
<dbReference type="GO" id="GO:0150052">
    <property type="term" value="P:regulation of postsynapse assembly"/>
    <property type="evidence" value="ECO:0007669"/>
    <property type="project" value="Ensembl"/>
</dbReference>
<dbReference type="GO" id="GO:0007165">
    <property type="term" value="P:signal transduction"/>
    <property type="evidence" value="ECO:0000304"/>
    <property type="project" value="ProtInc"/>
</dbReference>
<dbReference type="CDD" id="cd01493">
    <property type="entry name" value="APPBP1_RUB"/>
    <property type="match status" value="1"/>
</dbReference>
<dbReference type="FunFam" id="3.40.50.720:FF:000174">
    <property type="entry name" value="NEDD8-activating enzyme E1 regulatory subunit"/>
    <property type="match status" value="1"/>
</dbReference>
<dbReference type="FunFam" id="3.40.50.720:FF:000187">
    <property type="entry name" value="NEDD8-activating enzyme E1 regulatory subunit"/>
    <property type="match status" value="1"/>
</dbReference>
<dbReference type="Gene3D" id="3.40.50.720">
    <property type="entry name" value="NAD(P)-binding Rossmann-like Domain"/>
    <property type="match status" value="2"/>
</dbReference>
<dbReference type="InterPro" id="IPR030667">
    <property type="entry name" value="APP-BP1"/>
</dbReference>
<dbReference type="InterPro" id="IPR045886">
    <property type="entry name" value="ThiF/MoeB/HesA"/>
</dbReference>
<dbReference type="InterPro" id="IPR000594">
    <property type="entry name" value="ThiF_NAD_FAD-bd"/>
</dbReference>
<dbReference type="InterPro" id="IPR035985">
    <property type="entry name" value="Ubiquitin-activating_enz"/>
</dbReference>
<dbReference type="PANTHER" id="PTHR10953:SF29">
    <property type="entry name" value="NEDD8-ACTIVATING ENZYME E1 REGULATORY SUBUNIT"/>
    <property type="match status" value="1"/>
</dbReference>
<dbReference type="PANTHER" id="PTHR10953">
    <property type="entry name" value="UBIQUITIN-ACTIVATING ENZYME E1"/>
    <property type="match status" value="1"/>
</dbReference>
<dbReference type="Pfam" id="PF00899">
    <property type="entry name" value="ThiF"/>
    <property type="match status" value="1"/>
</dbReference>
<dbReference type="PIRSF" id="PIRSF039099">
    <property type="entry name" value="APP-BP1"/>
    <property type="match status" value="1"/>
</dbReference>
<dbReference type="SUPFAM" id="SSF69572">
    <property type="entry name" value="Activating enzymes of the ubiquitin-like proteins"/>
    <property type="match status" value="1"/>
</dbReference>
<gene>
    <name type="primary">NAE1</name>
    <name type="synonym">APPBP1</name>
    <name type="ORF">HPP1</name>
</gene>
<organism>
    <name type="scientific">Homo sapiens</name>
    <name type="common">Human</name>
    <dbReference type="NCBI Taxonomy" id="9606"/>
    <lineage>
        <taxon>Eukaryota</taxon>
        <taxon>Metazoa</taxon>
        <taxon>Chordata</taxon>
        <taxon>Craniata</taxon>
        <taxon>Vertebrata</taxon>
        <taxon>Euteleostomi</taxon>
        <taxon>Mammalia</taxon>
        <taxon>Eutheria</taxon>
        <taxon>Euarchontoglires</taxon>
        <taxon>Primates</taxon>
        <taxon>Haplorrhini</taxon>
        <taxon>Catarrhini</taxon>
        <taxon>Hominidae</taxon>
        <taxon>Homo</taxon>
    </lineage>
</organism>
<evidence type="ECO:0000250" key="1">
    <source>
        <dbReference type="UniProtKB" id="Q8VBW6"/>
    </source>
</evidence>
<evidence type="ECO:0000269" key="2">
    <source>
    </source>
</evidence>
<evidence type="ECO:0000269" key="3">
    <source>
    </source>
</evidence>
<evidence type="ECO:0000269" key="4">
    <source>
    </source>
</evidence>
<evidence type="ECO:0000269" key="5">
    <source>
    </source>
</evidence>
<evidence type="ECO:0000269" key="6">
    <source>
    </source>
</evidence>
<evidence type="ECO:0000269" key="7">
    <source>
    </source>
</evidence>
<evidence type="ECO:0000269" key="8">
    <source>
    </source>
</evidence>
<evidence type="ECO:0000269" key="9">
    <source>
    </source>
</evidence>
<evidence type="ECO:0000269" key="10">
    <source>
    </source>
</evidence>
<evidence type="ECO:0000269" key="11">
    <source>
    </source>
</evidence>
<evidence type="ECO:0000303" key="12">
    <source>
    </source>
</evidence>
<evidence type="ECO:0000305" key="13"/>
<evidence type="ECO:0007744" key="14">
    <source>
    </source>
</evidence>
<evidence type="ECO:0007744" key="15">
    <source>
    </source>
</evidence>
<evidence type="ECO:0007829" key="16">
    <source>
        <dbReference type="PDB" id="1TT5"/>
    </source>
</evidence>
<evidence type="ECO:0007829" key="17">
    <source>
        <dbReference type="PDB" id="1YOV"/>
    </source>
</evidence>
<evidence type="ECO:0007829" key="18">
    <source>
        <dbReference type="PDB" id="3DBR"/>
    </source>
</evidence>